<organism>
    <name type="scientific">Escherichia coli O7:K1 (strain IAI39 / ExPEC)</name>
    <dbReference type="NCBI Taxonomy" id="585057"/>
    <lineage>
        <taxon>Bacteria</taxon>
        <taxon>Pseudomonadati</taxon>
        <taxon>Pseudomonadota</taxon>
        <taxon>Gammaproteobacteria</taxon>
        <taxon>Enterobacterales</taxon>
        <taxon>Enterobacteriaceae</taxon>
        <taxon>Escherichia</taxon>
    </lineage>
</organism>
<feature type="signal peptide" evidence="1">
    <location>
        <begin position="1"/>
        <end position="21"/>
    </location>
</feature>
<feature type="propeptide" id="PRO_1000128923" evidence="1">
    <location>
        <begin position="22"/>
        <end position="58"/>
    </location>
</feature>
<feature type="chain" id="PRO_1000128924" description="Acid shock protein">
    <location>
        <begin position="59"/>
        <end position="102"/>
    </location>
</feature>
<feature type="region of interest" description="Disordered" evidence="2">
    <location>
        <begin position="22"/>
        <end position="102"/>
    </location>
</feature>
<feature type="compositionally biased region" description="Low complexity" evidence="2">
    <location>
        <begin position="22"/>
        <end position="41"/>
    </location>
</feature>
<feature type="compositionally biased region" description="Basic residues" evidence="2">
    <location>
        <begin position="80"/>
        <end position="90"/>
    </location>
</feature>
<feature type="compositionally biased region" description="Low complexity" evidence="2">
    <location>
        <begin position="91"/>
        <end position="102"/>
    </location>
</feature>
<keyword id="KW-0574">Periplasm</keyword>
<keyword id="KW-0732">Signal</keyword>
<gene>
    <name evidence="1" type="primary">asr</name>
    <name type="ordered locus">ECIAI39_1461</name>
</gene>
<protein>
    <recommendedName>
        <fullName evidence="1">Acid shock protein</fullName>
    </recommendedName>
</protein>
<reference key="1">
    <citation type="journal article" date="2009" name="PLoS Genet.">
        <title>Organised genome dynamics in the Escherichia coli species results in highly diverse adaptive paths.</title>
        <authorList>
            <person name="Touchon M."/>
            <person name="Hoede C."/>
            <person name="Tenaillon O."/>
            <person name="Barbe V."/>
            <person name="Baeriswyl S."/>
            <person name="Bidet P."/>
            <person name="Bingen E."/>
            <person name="Bonacorsi S."/>
            <person name="Bouchier C."/>
            <person name="Bouvet O."/>
            <person name="Calteau A."/>
            <person name="Chiapello H."/>
            <person name="Clermont O."/>
            <person name="Cruveiller S."/>
            <person name="Danchin A."/>
            <person name="Diard M."/>
            <person name="Dossat C."/>
            <person name="Karoui M.E."/>
            <person name="Frapy E."/>
            <person name="Garry L."/>
            <person name="Ghigo J.M."/>
            <person name="Gilles A.M."/>
            <person name="Johnson J."/>
            <person name="Le Bouguenec C."/>
            <person name="Lescat M."/>
            <person name="Mangenot S."/>
            <person name="Martinez-Jehanne V."/>
            <person name="Matic I."/>
            <person name="Nassif X."/>
            <person name="Oztas S."/>
            <person name="Petit M.A."/>
            <person name="Pichon C."/>
            <person name="Rouy Z."/>
            <person name="Ruf C.S."/>
            <person name="Schneider D."/>
            <person name="Tourret J."/>
            <person name="Vacherie B."/>
            <person name="Vallenet D."/>
            <person name="Medigue C."/>
            <person name="Rocha E.P.C."/>
            <person name="Denamur E."/>
        </authorList>
    </citation>
    <scope>NUCLEOTIDE SEQUENCE [LARGE SCALE GENOMIC DNA]</scope>
    <source>
        <strain>IAI39 / ExPEC</strain>
    </source>
</reference>
<accession>B7NUP2</accession>
<sequence>MKKVLALVVAAAMGLSSAAFAAETATTPAPTATTTKAAPAKTTHHKKQHKAAPAQKAQAAKKHHKNAKAEQKAPEQKAQAAKKHAKKHSHQQPAKPAAQPAA</sequence>
<dbReference type="EMBL" id="CU928164">
    <property type="protein sequence ID" value="CAR17594.1"/>
    <property type="molecule type" value="Genomic_DNA"/>
</dbReference>
<dbReference type="RefSeq" id="WP_001362115.1">
    <property type="nucleotide sequence ID" value="NC_011750.1"/>
</dbReference>
<dbReference type="RefSeq" id="YP_002407466.1">
    <property type="nucleotide sequence ID" value="NC_011750.1"/>
</dbReference>
<dbReference type="STRING" id="585057.ECIAI39_1461"/>
<dbReference type="KEGG" id="ect:ECIAI39_1461"/>
<dbReference type="PATRIC" id="fig|585057.6.peg.1526"/>
<dbReference type="HOGENOM" id="CLU_102486_2_0_6"/>
<dbReference type="Proteomes" id="UP000000749">
    <property type="component" value="Chromosome"/>
</dbReference>
<dbReference type="GO" id="GO:0042597">
    <property type="term" value="C:periplasmic space"/>
    <property type="evidence" value="ECO:0007669"/>
    <property type="project" value="UniProtKB-SubCell"/>
</dbReference>
<dbReference type="HAMAP" id="MF_00546">
    <property type="entry name" value="Asr"/>
    <property type="match status" value="1"/>
</dbReference>
<dbReference type="InterPro" id="IPR023497">
    <property type="entry name" value="Acid_shock"/>
</dbReference>
<dbReference type="NCBIfam" id="NF033636">
    <property type="entry name" value="acid_shock_Asr"/>
    <property type="match status" value="1"/>
</dbReference>
<dbReference type="Pfam" id="PF06392">
    <property type="entry name" value="Asr"/>
    <property type="match status" value="1"/>
</dbReference>
<proteinExistence type="inferred from homology"/>
<name>ASR_ECO7I</name>
<comment type="function">
    <text evidence="1">Required for growth and/or survival at acidic conditions.</text>
</comment>
<comment type="subcellular location">
    <subcellularLocation>
        <location evidence="1">Periplasm</location>
    </subcellularLocation>
</comment>
<comment type="PTM">
    <text evidence="1">Proteolytic processing gives rise to the active protein.</text>
</comment>
<comment type="similarity">
    <text evidence="1">Belongs to the Asr family.</text>
</comment>
<evidence type="ECO:0000255" key="1">
    <source>
        <dbReference type="HAMAP-Rule" id="MF_00546"/>
    </source>
</evidence>
<evidence type="ECO:0000256" key="2">
    <source>
        <dbReference type="SAM" id="MobiDB-lite"/>
    </source>
</evidence>